<dbReference type="EC" id="3.5.1.5" evidence="1"/>
<dbReference type="EMBL" id="BX571965">
    <property type="protein sequence ID" value="CAH36665.1"/>
    <property type="molecule type" value="Genomic_DNA"/>
</dbReference>
<dbReference type="RefSeq" id="WP_004186513.1">
    <property type="nucleotide sequence ID" value="NZ_CP009538.1"/>
</dbReference>
<dbReference type="RefSeq" id="YP_109253.1">
    <property type="nucleotide sequence ID" value="NC_006350.1"/>
</dbReference>
<dbReference type="SMR" id="Q63RL5"/>
<dbReference type="STRING" id="272560.BPSL2657"/>
<dbReference type="GeneID" id="93061237"/>
<dbReference type="KEGG" id="bps:BPSL2657"/>
<dbReference type="PATRIC" id="fig|272560.51.peg.2687"/>
<dbReference type="eggNOG" id="COG0831">
    <property type="taxonomic scope" value="Bacteria"/>
</dbReference>
<dbReference type="UniPathway" id="UPA00258">
    <property type="reaction ID" value="UER00370"/>
</dbReference>
<dbReference type="Proteomes" id="UP000000605">
    <property type="component" value="Chromosome 1"/>
</dbReference>
<dbReference type="GO" id="GO:0005737">
    <property type="term" value="C:cytoplasm"/>
    <property type="evidence" value="ECO:0007669"/>
    <property type="project" value="UniProtKB-SubCell"/>
</dbReference>
<dbReference type="GO" id="GO:0016151">
    <property type="term" value="F:nickel cation binding"/>
    <property type="evidence" value="ECO:0007669"/>
    <property type="project" value="InterPro"/>
</dbReference>
<dbReference type="GO" id="GO:0009039">
    <property type="term" value="F:urease activity"/>
    <property type="evidence" value="ECO:0007669"/>
    <property type="project" value="UniProtKB-UniRule"/>
</dbReference>
<dbReference type="GO" id="GO:0043419">
    <property type="term" value="P:urea catabolic process"/>
    <property type="evidence" value="ECO:0007669"/>
    <property type="project" value="UniProtKB-UniRule"/>
</dbReference>
<dbReference type="CDD" id="cd00390">
    <property type="entry name" value="Urease_gamma"/>
    <property type="match status" value="1"/>
</dbReference>
<dbReference type="Gene3D" id="3.30.280.10">
    <property type="entry name" value="Urease, gamma-like subunit"/>
    <property type="match status" value="1"/>
</dbReference>
<dbReference type="HAMAP" id="MF_00739">
    <property type="entry name" value="Urease_gamma"/>
    <property type="match status" value="1"/>
</dbReference>
<dbReference type="InterPro" id="IPR012010">
    <property type="entry name" value="Urease_gamma"/>
</dbReference>
<dbReference type="InterPro" id="IPR002026">
    <property type="entry name" value="Urease_gamma/gamma-beta_su"/>
</dbReference>
<dbReference type="InterPro" id="IPR036463">
    <property type="entry name" value="Urease_gamma_sf"/>
</dbReference>
<dbReference type="InterPro" id="IPR050069">
    <property type="entry name" value="Urease_subunit"/>
</dbReference>
<dbReference type="NCBIfam" id="NF009712">
    <property type="entry name" value="PRK13241.1"/>
    <property type="match status" value="1"/>
</dbReference>
<dbReference type="NCBIfam" id="TIGR00193">
    <property type="entry name" value="urease_gam"/>
    <property type="match status" value="1"/>
</dbReference>
<dbReference type="PANTHER" id="PTHR33569">
    <property type="entry name" value="UREASE"/>
    <property type="match status" value="1"/>
</dbReference>
<dbReference type="PANTHER" id="PTHR33569:SF1">
    <property type="entry name" value="UREASE"/>
    <property type="match status" value="1"/>
</dbReference>
<dbReference type="Pfam" id="PF00547">
    <property type="entry name" value="Urease_gamma"/>
    <property type="match status" value="1"/>
</dbReference>
<dbReference type="PIRSF" id="PIRSF001223">
    <property type="entry name" value="Urease_gamma"/>
    <property type="match status" value="1"/>
</dbReference>
<dbReference type="SUPFAM" id="SSF54111">
    <property type="entry name" value="Urease, gamma-subunit"/>
    <property type="match status" value="1"/>
</dbReference>
<protein>
    <recommendedName>
        <fullName evidence="1">Urease subunit gamma</fullName>
        <ecNumber evidence="1">3.5.1.5</ecNumber>
    </recommendedName>
    <alternativeName>
        <fullName evidence="1">Urea amidohydrolase subunit gamma</fullName>
    </alternativeName>
</protein>
<proteinExistence type="inferred from homology"/>
<reference key="1">
    <citation type="journal article" date="2004" name="Proc. Natl. Acad. Sci. U.S.A.">
        <title>Genomic plasticity of the causative agent of melioidosis, Burkholderia pseudomallei.</title>
        <authorList>
            <person name="Holden M.T.G."/>
            <person name="Titball R.W."/>
            <person name="Peacock S.J."/>
            <person name="Cerdeno-Tarraga A.-M."/>
            <person name="Atkins T."/>
            <person name="Crossman L.C."/>
            <person name="Pitt T."/>
            <person name="Churcher C."/>
            <person name="Mungall K.L."/>
            <person name="Bentley S.D."/>
            <person name="Sebaihia M."/>
            <person name="Thomson N.R."/>
            <person name="Bason N."/>
            <person name="Beacham I.R."/>
            <person name="Brooks K."/>
            <person name="Brown K.A."/>
            <person name="Brown N.F."/>
            <person name="Challis G.L."/>
            <person name="Cherevach I."/>
            <person name="Chillingworth T."/>
            <person name="Cronin A."/>
            <person name="Crossett B."/>
            <person name="Davis P."/>
            <person name="DeShazer D."/>
            <person name="Feltwell T."/>
            <person name="Fraser A."/>
            <person name="Hance Z."/>
            <person name="Hauser H."/>
            <person name="Holroyd S."/>
            <person name="Jagels K."/>
            <person name="Keith K.E."/>
            <person name="Maddison M."/>
            <person name="Moule S."/>
            <person name="Price C."/>
            <person name="Quail M.A."/>
            <person name="Rabbinowitsch E."/>
            <person name="Rutherford K."/>
            <person name="Sanders M."/>
            <person name="Simmonds M."/>
            <person name="Songsivilai S."/>
            <person name="Stevens K."/>
            <person name="Tumapa S."/>
            <person name="Vesaratchavest M."/>
            <person name="Whitehead S."/>
            <person name="Yeats C."/>
            <person name="Barrell B.G."/>
            <person name="Oyston P.C.F."/>
            <person name="Parkhill J."/>
        </authorList>
    </citation>
    <scope>NUCLEOTIDE SEQUENCE [LARGE SCALE GENOMIC DNA]</scope>
    <source>
        <strain>K96243</strain>
    </source>
</reference>
<organism>
    <name type="scientific">Burkholderia pseudomallei (strain K96243)</name>
    <dbReference type="NCBI Taxonomy" id="272560"/>
    <lineage>
        <taxon>Bacteria</taxon>
        <taxon>Pseudomonadati</taxon>
        <taxon>Pseudomonadota</taxon>
        <taxon>Betaproteobacteria</taxon>
        <taxon>Burkholderiales</taxon>
        <taxon>Burkholderiaceae</taxon>
        <taxon>Burkholderia</taxon>
        <taxon>pseudomallei group</taxon>
    </lineage>
</organism>
<feature type="chain" id="PRO_0000098006" description="Urease subunit gamma">
    <location>
        <begin position="1"/>
        <end position="100"/>
    </location>
</feature>
<accession>Q63RL5</accession>
<evidence type="ECO:0000255" key="1">
    <source>
        <dbReference type="HAMAP-Rule" id="MF_00739"/>
    </source>
</evidence>
<sequence length="100" mass="11172">MKLTPREKDKLLIFTAALLAERRRARGLKLNYPETVAFITAALMEAARDGRTVAEVMHYGTTLLTRDDVMEGVPEMIPDIQVEATFPDGTKLVTVHHPIP</sequence>
<name>URE3_BURPS</name>
<keyword id="KW-0963">Cytoplasm</keyword>
<keyword id="KW-0378">Hydrolase</keyword>
<keyword id="KW-1185">Reference proteome</keyword>
<gene>
    <name evidence="1" type="primary">ureA</name>
    <name type="ordered locus">BPSL2657</name>
</gene>
<comment type="catalytic activity">
    <reaction evidence="1">
        <text>urea + 2 H2O + H(+) = hydrogencarbonate + 2 NH4(+)</text>
        <dbReference type="Rhea" id="RHEA:20557"/>
        <dbReference type="ChEBI" id="CHEBI:15377"/>
        <dbReference type="ChEBI" id="CHEBI:15378"/>
        <dbReference type="ChEBI" id="CHEBI:16199"/>
        <dbReference type="ChEBI" id="CHEBI:17544"/>
        <dbReference type="ChEBI" id="CHEBI:28938"/>
        <dbReference type="EC" id="3.5.1.5"/>
    </reaction>
</comment>
<comment type="pathway">
    <text evidence="1">Nitrogen metabolism; urea degradation; CO(2) and NH(3) from urea (urease route): step 1/1.</text>
</comment>
<comment type="subunit">
    <text evidence="1">Heterotrimer of UreA (gamma), UreB (beta) and UreC (alpha) subunits. Three heterotrimers associate to form the active enzyme.</text>
</comment>
<comment type="subcellular location">
    <subcellularLocation>
        <location evidence="1">Cytoplasm</location>
    </subcellularLocation>
</comment>
<comment type="similarity">
    <text evidence="1">Belongs to the urease gamma subunit family.</text>
</comment>